<proteinExistence type="inferred from homology"/>
<name>SYR_COREF</name>
<gene>
    <name evidence="1" type="primary">argS</name>
    <name type="ordered locus">CE1276</name>
</gene>
<evidence type="ECO:0000255" key="1">
    <source>
        <dbReference type="HAMAP-Rule" id="MF_00123"/>
    </source>
</evidence>
<sequence>MTPADLATLIKQTAVEVLTSRDLDASMLPEQIVVERPRNPEHGDYATNVALQVAKKVGVTPRDLGTWLAEALAADDSIDSAEIAGPGFINIRLAAAAQGEIVAKILEQGEKFGTSDHLSHLDVNLEFVSANPTGPIHLGGTRWAAVGDSLGRVLEAAGAKVTREYYFNDHGRQIDRFALSLLAAAKGEPTPEDGYGGEYIREIAEAIVAKHPDALDRTPEETQELFRSEGVEMMFSHIRESLHEFGTDFDVYFHENSLFESGAVDRAVQKLKDNGNLYESDGAWWLRSTDFGDDKDRVVIKSDGDAAYIAGDIAYVQDKFERGHNLNIYMLGADHHGYIARLKAAAAALGYAPEGVEVLIGQMVNLLRDGTAVRMSKRAGTVVTLDDLVEAIGIDAARYSLIRSSVDSSLDIDLGLWESQSSDNPVYYVQYGHARLCSIARKAADLGVTYEDADLSLLTHDREGDLIRTLGEFPAVIRAAADLREPHRIARYAEELAGTFHRFYDSCQILPKADEEKAPIHAARLALAAATRQTLANALALVGVSAPEKM</sequence>
<protein>
    <recommendedName>
        <fullName evidence="1">Arginine--tRNA ligase</fullName>
        <ecNumber evidence="1">6.1.1.19</ecNumber>
    </recommendedName>
    <alternativeName>
        <fullName evidence="1">Arginyl-tRNA synthetase</fullName>
        <shortName evidence="1">ArgRS</shortName>
    </alternativeName>
</protein>
<organism>
    <name type="scientific">Corynebacterium efficiens (strain DSM 44549 / YS-314 / AJ 12310 / JCM 11189 / NBRC 100395)</name>
    <dbReference type="NCBI Taxonomy" id="196164"/>
    <lineage>
        <taxon>Bacteria</taxon>
        <taxon>Bacillati</taxon>
        <taxon>Actinomycetota</taxon>
        <taxon>Actinomycetes</taxon>
        <taxon>Mycobacteriales</taxon>
        <taxon>Corynebacteriaceae</taxon>
        <taxon>Corynebacterium</taxon>
    </lineage>
</organism>
<feature type="chain" id="PRO_0000151553" description="Arginine--tRNA ligase">
    <location>
        <begin position="1"/>
        <end position="550"/>
    </location>
</feature>
<feature type="short sequence motif" description="'HIGH' region">
    <location>
        <begin position="130"/>
        <end position="140"/>
    </location>
</feature>
<comment type="catalytic activity">
    <reaction evidence="1">
        <text>tRNA(Arg) + L-arginine + ATP = L-arginyl-tRNA(Arg) + AMP + diphosphate</text>
        <dbReference type="Rhea" id="RHEA:20301"/>
        <dbReference type="Rhea" id="RHEA-COMP:9658"/>
        <dbReference type="Rhea" id="RHEA-COMP:9673"/>
        <dbReference type="ChEBI" id="CHEBI:30616"/>
        <dbReference type="ChEBI" id="CHEBI:32682"/>
        <dbReference type="ChEBI" id="CHEBI:33019"/>
        <dbReference type="ChEBI" id="CHEBI:78442"/>
        <dbReference type="ChEBI" id="CHEBI:78513"/>
        <dbReference type="ChEBI" id="CHEBI:456215"/>
        <dbReference type="EC" id="6.1.1.19"/>
    </reaction>
</comment>
<comment type="subunit">
    <text evidence="1">Monomer.</text>
</comment>
<comment type="subcellular location">
    <subcellularLocation>
        <location evidence="1">Cytoplasm</location>
    </subcellularLocation>
</comment>
<comment type="similarity">
    <text evidence="1">Belongs to the class-I aminoacyl-tRNA synthetase family.</text>
</comment>
<accession>Q8FQ57</accession>
<reference key="1">
    <citation type="journal article" date="2003" name="Genome Res.">
        <title>Comparative complete genome sequence analysis of the amino acid replacements responsible for the thermostability of Corynebacterium efficiens.</title>
        <authorList>
            <person name="Nishio Y."/>
            <person name="Nakamura Y."/>
            <person name="Kawarabayasi Y."/>
            <person name="Usuda Y."/>
            <person name="Kimura E."/>
            <person name="Sugimoto S."/>
            <person name="Matsui K."/>
            <person name="Yamagishi A."/>
            <person name="Kikuchi H."/>
            <person name="Ikeo K."/>
            <person name="Gojobori T."/>
        </authorList>
    </citation>
    <scope>NUCLEOTIDE SEQUENCE [LARGE SCALE GENOMIC DNA]</scope>
    <source>
        <strain>DSM 44549 / YS-314 / AJ 12310 / JCM 11189 / NBRC 100395</strain>
    </source>
</reference>
<keyword id="KW-0030">Aminoacyl-tRNA synthetase</keyword>
<keyword id="KW-0067">ATP-binding</keyword>
<keyword id="KW-0963">Cytoplasm</keyword>
<keyword id="KW-0436">Ligase</keyword>
<keyword id="KW-0547">Nucleotide-binding</keyword>
<keyword id="KW-0648">Protein biosynthesis</keyword>
<keyword id="KW-1185">Reference proteome</keyword>
<dbReference type="EC" id="6.1.1.19" evidence="1"/>
<dbReference type="EMBL" id="BA000035">
    <property type="protein sequence ID" value="BAC18086.1"/>
    <property type="molecule type" value="Genomic_DNA"/>
</dbReference>
<dbReference type="RefSeq" id="WP_006769237.1">
    <property type="nucleotide sequence ID" value="NC_004369.1"/>
</dbReference>
<dbReference type="SMR" id="Q8FQ57"/>
<dbReference type="STRING" id="196164.gene:10741685"/>
<dbReference type="KEGG" id="cef:CE1276"/>
<dbReference type="eggNOG" id="COG0018">
    <property type="taxonomic scope" value="Bacteria"/>
</dbReference>
<dbReference type="HOGENOM" id="CLU_006406_0_1_11"/>
<dbReference type="OrthoDB" id="9803211at2"/>
<dbReference type="Proteomes" id="UP000001409">
    <property type="component" value="Chromosome"/>
</dbReference>
<dbReference type="GO" id="GO:0005737">
    <property type="term" value="C:cytoplasm"/>
    <property type="evidence" value="ECO:0007669"/>
    <property type="project" value="UniProtKB-SubCell"/>
</dbReference>
<dbReference type="GO" id="GO:0004814">
    <property type="term" value="F:arginine-tRNA ligase activity"/>
    <property type="evidence" value="ECO:0007669"/>
    <property type="project" value="UniProtKB-UniRule"/>
</dbReference>
<dbReference type="GO" id="GO:0005524">
    <property type="term" value="F:ATP binding"/>
    <property type="evidence" value="ECO:0007669"/>
    <property type="project" value="UniProtKB-UniRule"/>
</dbReference>
<dbReference type="GO" id="GO:0006420">
    <property type="term" value="P:arginyl-tRNA aminoacylation"/>
    <property type="evidence" value="ECO:0007669"/>
    <property type="project" value="UniProtKB-UniRule"/>
</dbReference>
<dbReference type="CDD" id="cd00671">
    <property type="entry name" value="ArgRS_core"/>
    <property type="match status" value="1"/>
</dbReference>
<dbReference type="FunFam" id="1.10.730.10:FF:000008">
    <property type="entry name" value="Arginine--tRNA ligase"/>
    <property type="match status" value="1"/>
</dbReference>
<dbReference type="FunFam" id="3.40.50.620:FF:000062">
    <property type="entry name" value="Arginine--tRNA ligase"/>
    <property type="match status" value="1"/>
</dbReference>
<dbReference type="Gene3D" id="3.30.1360.70">
    <property type="entry name" value="Arginyl tRNA synthetase N-terminal domain"/>
    <property type="match status" value="1"/>
</dbReference>
<dbReference type="Gene3D" id="3.40.50.620">
    <property type="entry name" value="HUPs"/>
    <property type="match status" value="1"/>
</dbReference>
<dbReference type="Gene3D" id="1.10.730.10">
    <property type="entry name" value="Isoleucyl-tRNA Synthetase, Domain 1"/>
    <property type="match status" value="1"/>
</dbReference>
<dbReference type="HAMAP" id="MF_00123">
    <property type="entry name" value="Arg_tRNA_synth"/>
    <property type="match status" value="1"/>
</dbReference>
<dbReference type="InterPro" id="IPR001412">
    <property type="entry name" value="aa-tRNA-synth_I_CS"/>
</dbReference>
<dbReference type="InterPro" id="IPR001278">
    <property type="entry name" value="Arg-tRNA-ligase"/>
</dbReference>
<dbReference type="InterPro" id="IPR005148">
    <property type="entry name" value="Arg-tRNA-synth_N"/>
</dbReference>
<dbReference type="InterPro" id="IPR036695">
    <property type="entry name" value="Arg-tRNA-synth_N_sf"/>
</dbReference>
<dbReference type="InterPro" id="IPR035684">
    <property type="entry name" value="ArgRS_core"/>
</dbReference>
<dbReference type="InterPro" id="IPR008909">
    <property type="entry name" value="DALR_anticod-bd"/>
</dbReference>
<dbReference type="InterPro" id="IPR014729">
    <property type="entry name" value="Rossmann-like_a/b/a_fold"/>
</dbReference>
<dbReference type="InterPro" id="IPR009080">
    <property type="entry name" value="tRNAsynth_Ia_anticodon-bd"/>
</dbReference>
<dbReference type="NCBIfam" id="TIGR00456">
    <property type="entry name" value="argS"/>
    <property type="match status" value="1"/>
</dbReference>
<dbReference type="PANTHER" id="PTHR11956:SF5">
    <property type="entry name" value="ARGININE--TRNA LIGASE, CYTOPLASMIC"/>
    <property type="match status" value="1"/>
</dbReference>
<dbReference type="PANTHER" id="PTHR11956">
    <property type="entry name" value="ARGINYL-TRNA SYNTHETASE"/>
    <property type="match status" value="1"/>
</dbReference>
<dbReference type="Pfam" id="PF03485">
    <property type="entry name" value="Arg_tRNA_synt_N"/>
    <property type="match status" value="1"/>
</dbReference>
<dbReference type="Pfam" id="PF05746">
    <property type="entry name" value="DALR_1"/>
    <property type="match status" value="1"/>
</dbReference>
<dbReference type="Pfam" id="PF00750">
    <property type="entry name" value="tRNA-synt_1d"/>
    <property type="match status" value="1"/>
</dbReference>
<dbReference type="PRINTS" id="PR01038">
    <property type="entry name" value="TRNASYNTHARG"/>
</dbReference>
<dbReference type="SMART" id="SM01016">
    <property type="entry name" value="Arg_tRNA_synt_N"/>
    <property type="match status" value="1"/>
</dbReference>
<dbReference type="SMART" id="SM00836">
    <property type="entry name" value="DALR_1"/>
    <property type="match status" value="1"/>
</dbReference>
<dbReference type="SUPFAM" id="SSF47323">
    <property type="entry name" value="Anticodon-binding domain of a subclass of class I aminoacyl-tRNA synthetases"/>
    <property type="match status" value="1"/>
</dbReference>
<dbReference type="SUPFAM" id="SSF55190">
    <property type="entry name" value="Arginyl-tRNA synthetase (ArgRS), N-terminal 'additional' domain"/>
    <property type="match status" value="1"/>
</dbReference>
<dbReference type="SUPFAM" id="SSF52374">
    <property type="entry name" value="Nucleotidylyl transferase"/>
    <property type="match status" value="1"/>
</dbReference>
<dbReference type="PROSITE" id="PS00178">
    <property type="entry name" value="AA_TRNA_LIGASE_I"/>
    <property type="match status" value="1"/>
</dbReference>